<dbReference type="EMBL" id="BX950851">
    <property type="protein sequence ID" value="CAG77135.1"/>
    <property type="molecule type" value="Genomic_DNA"/>
</dbReference>
<dbReference type="RefSeq" id="WP_011095709.1">
    <property type="nucleotide sequence ID" value="NC_004547.2"/>
</dbReference>
<dbReference type="SMR" id="Q6CZB5"/>
<dbReference type="STRING" id="218491.ECA4238"/>
<dbReference type="GeneID" id="57210910"/>
<dbReference type="KEGG" id="eca:ECA4238"/>
<dbReference type="PATRIC" id="fig|218491.5.peg.4315"/>
<dbReference type="eggNOG" id="COG4206">
    <property type="taxonomic scope" value="Bacteria"/>
</dbReference>
<dbReference type="HOGENOM" id="CLU_008287_18_5_6"/>
<dbReference type="OrthoDB" id="9764669at2"/>
<dbReference type="Proteomes" id="UP000007966">
    <property type="component" value="Chromosome"/>
</dbReference>
<dbReference type="GO" id="GO:0009279">
    <property type="term" value="C:cell outer membrane"/>
    <property type="evidence" value="ECO:0007669"/>
    <property type="project" value="UniProtKB-SubCell"/>
</dbReference>
<dbReference type="GO" id="GO:0046930">
    <property type="term" value="C:pore complex"/>
    <property type="evidence" value="ECO:0007669"/>
    <property type="project" value="UniProtKB-KW"/>
</dbReference>
<dbReference type="GO" id="GO:0015420">
    <property type="term" value="F:ABC-type vitamin B12 transporter activity"/>
    <property type="evidence" value="ECO:0007669"/>
    <property type="project" value="InterPro"/>
</dbReference>
<dbReference type="GO" id="GO:0046872">
    <property type="term" value="F:metal ion binding"/>
    <property type="evidence" value="ECO:0007669"/>
    <property type="project" value="UniProtKB-KW"/>
</dbReference>
<dbReference type="GO" id="GO:0015288">
    <property type="term" value="F:porin activity"/>
    <property type="evidence" value="ECO:0007669"/>
    <property type="project" value="UniProtKB-KW"/>
</dbReference>
<dbReference type="GO" id="GO:0006811">
    <property type="term" value="P:monoatomic ion transport"/>
    <property type="evidence" value="ECO:0007669"/>
    <property type="project" value="UniProtKB-KW"/>
</dbReference>
<dbReference type="CDD" id="cd01347">
    <property type="entry name" value="ligand_gated_channel"/>
    <property type="match status" value="1"/>
</dbReference>
<dbReference type="FunFam" id="2.170.130.10:FF:000002">
    <property type="entry name" value="Vitamin B12 transporter BtuB"/>
    <property type="match status" value="1"/>
</dbReference>
<dbReference type="Gene3D" id="2.40.170.20">
    <property type="entry name" value="TonB-dependent receptor, beta-barrel domain"/>
    <property type="match status" value="1"/>
</dbReference>
<dbReference type="Gene3D" id="2.170.130.10">
    <property type="entry name" value="TonB-dependent receptor, plug domain"/>
    <property type="match status" value="1"/>
</dbReference>
<dbReference type="HAMAP" id="MF_01531">
    <property type="entry name" value="BtuB"/>
    <property type="match status" value="1"/>
</dbReference>
<dbReference type="InterPro" id="IPR010101">
    <property type="entry name" value="B12_transptr_BtuB"/>
</dbReference>
<dbReference type="InterPro" id="IPR012910">
    <property type="entry name" value="Plug_dom"/>
</dbReference>
<dbReference type="InterPro" id="IPR037066">
    <property type="entry name" value="Plug_dom_sf"/>
</dbReference>
<dbReference type="InterPro" id="IPR039426">
    <property type="entry name" value="TonB-dep_rcpt-like"/>
</dbReference>
<dbReference type="InterPro" id="IPR000531">
    <property type="entry name" value="TonB-dep_rcpt_b-brl"/>
</dbReference>
<dbReference type="InterPro" id="IPR036942">
    <property type="entry name" value="TonB_rcpt_b-brl_sf"/>
</dbReference>
<dbReference type="InterPro" id="IPR010917">
    <property type="entry name" value="TonB_rcpt_CS"/>
</dbReference>
<dbReference type="NCBIfam" id="NF007926">
    <property type="entry name" value="PRK10641.1"/>
    <property type="match status" value="1"/>
</dbReference>
<dbReference type="NCBIfam" id="TIGR01779">
    <property type="entry name" value="TonB-B12"/>
    <property type="match status" value="1"/>
</dbReference>
<dbReference type="PANTHER" id="PTHR30069:SF53">
    <property type="entry name" value="COLICIN I RECEPTOR-RELATED"/>
    <property type="match status" value="1"/>
</dbReference>
<dbReference type="PANTHER" id="PTHR30069">
    <property type="entry name" value="TONB-DEPENDENT OUTER MEMBRANE RECEPTOR"/>
    <property type="match status" value="1"/>
</dbReference>
<dbReference type="Pfam" id="PF07715">
    <property type="entry name" value="Plug"/>
    <property type="match status" value="1"/>
</dbReference>
<dbReference type="Pfam" id="PF00593">
    <property type="entry name" value="TonB_dep_Rec_b-barrel"/>
    <property type="match status" value="1"/>
</dbReference>
<dbReference type="SUPFAM" id="SSF56935">
    <property type="entry name" value="Porins"/>
    <property type="match status" value="1"/>
</dbReference>
<dbReference type="PROSITE" id="PS01156">
    <property type="entry name" value="TONB_DEPENDENT_REC_2"/>
    <property type="match status" value="1"/>
</dbReference>
<dbReference type="PROSITE" id="PS52016">
    <property type="entry name" value="TONB_DEPENDENT_REC_3"/>
    <property type="match status" value="1"/>
</dbReference>
<comment type="function">
    <text evidence="1">Involved in the active translocation of vitamin B12 (cyanocobalamin) across the outer membrane to the periplasmic space. It derives its energy for transport by interacting with the trans-periplasmic membrane protein TonB.</text>
</comment>
<comment type="subcellular location">
    <subcellularLocation>
        <location evidence="1">Cell outer membrane</location>
        <topology evidence="1">Multi-pass membrane protein</topology>
    </subcellularLocation>
</comment>
<comment type="similarity">
    <text evidence="1">Belongs to the TonB-dependent receptor family. BtuB (TC 1.B.14.3.1) subfamily.</text>
</comment>
<protein>
    <recommendedName>
        <fullName evidence="1">Vitamin B12 transporter BtuB</fullName>
    </recommendedName>
    <alternativeName>
        <fullName evidence="1">Cobalamin receptor</fullName>
    </alternativeName>
    <alternativeName>
        <fullName evidence="1">Outer membrane cobalamin translocator</fullName>
    </alternativeName>
</protein>
<name>BTUB_PECAS</name>
<sequence length="615" mass="67860">MIKKISLLTALSVTAFSGWAQETDNNAMVVTANRFQQPVNSVLAPTTVVTREEIDRWQAKSLTDVMRRLPGVDIGQNGGLGQKSSLFIRGTNSSHVLVLIDGIRLNQAGISGSSDLSQIPLSLVQKVEYIRGSRSAVYGSDAIGGVVNIITTREKNGTTLNAGVGSKGYQSYDAATQQALGDSTTATLAGNYVYTKGFDVVAYGTASPAQPDRDGFMSKSLYGTVEHKFGDQFSGFLRGYGYDNRTDYDNFSSVDTRQLYSQTWDTGLRYQSGIYSTQLIGSYSHSKDYDYDPLRGLHSSGSTLVDSQQYNAQWGNVLQVGAGTVSAGVDWQDQIIKPDSTSVNREESQNNTGIYLTGQQRFASIVLEGSVRGDDQSEFGWHNTWRTGASWEFIEGYSLIASYGTAFKAPNMGQLYGRFGSNRDLQPEESKQWESGVEGLTGPVIWRVSGYRNDIDNLIDATGSTGYVYENVGKAKIKGIEATASFDTGPVGHRISYDYVDSRNAITDEPLARRAKQQVKYQLDWQVYDLDWSVTYQYLGSRYDKDYGNYIPAVDDYQTVKLGGVSLWDLAASYPVTSHLTVRGRIANLFDKDYETAYGYRTAGREYYLTGSYTF</sequence>
<accession>Q6CZB5</accession>
<reference key="1">
    <citation type="journal article" date="2004" name="Proc. Natl. Acad. Sci. U.S.A.">
        <title>Genome sequence of the enterobacterial phytopathogen Erwinia carotovora subsp. atroseptica and characterization of virulence factors.</title>
        <authorList>
            <person name="Bell K.S."/>
            <person name="Sebaihia M."/>
            <person name="Pritchard L."/>
            <person name="Holden M.T.G."/>
            <person name="Hyman L.J."/>
            <person name="Holeva M.C."/>
            <person name="Thomson N.R."/>
            <person name="Bentley S.D."/>
            <person name="Churcher L.J.C."/>
            <person name="Mungall K."/>
            <person name="Atkin R."/>
            <person name="Bason N."/>
            <person name="Brooks K."/>
            <person name="Chillingworth T."/>
            <person name="Clark K."/>
            <person name="Doggett J."/>
            <person name="Fraser A."/>
            <person name="Hance Z."/>
            <person name="Hauser H."/>
            <person name="Jagels K."/>
            <person name="Moule S."/>
            <person name="Norbertczak H."/>
            <person name="Ormond D."/>
            <person name="Price C."/>
            <person name="Quail M.A."/>
            <person name="Sanders M."/>
            <person name="Walker D."/>
            <person name="Whitehead S."/>
            <person name="Salmond G.P.C."/>
            <person name="Birch P.R.J."/>
            <person name="Parkhill J."/>
            <person name="Toth I.K."/>
        </authorList>
    </citation>
    <scope>NUCLEOTIDE SEQUENCE [LARGE SCALE GENOMIC DNA]</scope>
    <source>
        <strain>SCRI 1043 / ATCC BAA-672</strain>
    </source>
</reference>
<gene>
    <name evidence="1" type="primary">btuB</name>
    <name type="ordered locus">ECA4238</name>
</gene>
<feature type="signal peptide" evidence="1">
    <location>
        <begin position="1"/>
        <end position="20"/>
    </location>
</feature>
<feature type="chain" id="PRO_0000003483" description="Vitamin B12 transporter BtuB">
    <location>
        <begin position="21"/>
        <end position="615"/>
    </location>
</feature>
<feature type="transmembrane region" description="Beta stranded" evidence="1">
    <location>
        <begin position="158"/>
        <end position="165"/>
    </location>
</feature>
<feature type="transmembrane region" description="Beta stranded" evidence="1">
    <location>
        <begin position="169"/>
        <end position="178"/>
    </location>
</feature>
<feature type="transmembrane region" description="Beta stranded" evidence="1">
    <location>
        <begin position="184"/>
        <end position="195"/>
    </location>
</feature>
<feature type="transmembrane region" description="Beta stranded" evidence="1">
    <location>
        <begin position="216"/>
        <end position="226"/>
    </location>
</feature>
<feature type="transmembrane region" description="Beta stranded" evidence="1">
    <location>
        <begin position="231"/>
        <end position="247"/>
    </location>
</feature>
<feature type="transmembrane region" description="Beta stranded" evidence="1">
    <location>
        <begin position="257"/>
        <end position="271"/>
    </location>
</feature>
<feature type="transmembrane region" description="Beta stranded" evidence="1">
    <location>
        <begin position="273"/>
        <end position="290"/>
    </location>
</feature>
<feature type="transmembrane region" description="Beta stranded" evidence="1">
    <location>
        <begin position="303"/>
        <end position="319"/>
    </location>
</feature>
<feature type="transmembrane region" description="Beta stranded" evidence="1">
    <location>
        <begin position="322"/>
        <end position="331"/>
    </location>
</feature>
<feature type="transmembrane region" description="Beta stranded" evidence="1">
    <location>
        <begin position="347"/>
        <end position="363"/>
    </location>
</feature>
<feature type="transmembrane region" description="Beta stranded" evidence="1">
    <location>
        <begin position="365"/>
        <end position="375"/>
    </location>
</feature>
<feature type="transmembrane region" description="Beta stranded" evidence="1">
    <location>
        <begin position="379"/>
        <end position="394"/>
    </location>
</feature>
<feature type="transmembrane region" description="Beta stranded" evidence="1">
    <location>
        <begin position="397"/>
        <end position="411"/>
    </location>
</feature>
<feature type="transmembrane region" description="Beta stranded" evidence="1">
    <location>
        <begin position="429"/>
        <end position="438"/>
    </location>
</feature>
<feature type="transmembrane region" description="Beta stranded" evidence="1">
    <location>
        <begin position="444"/>
        <end position="453"/>
    </location>
</feature>
<feature type="transmembrane region" description="Beta stranded" evidence="1">
    <location>
        <begin position="468"/>
        <end position="486"/>
    </location>
</feature>
<feature type="transmembrane region" description="Beta stranded" evidence="1">
    <location>
        <begin position="490"/>
        <end position="505"/>
    </location>
</feature>
<feature type="transmembrane region" description="Beta stranded" evidence="1">
    <location>
        <begin position="513"/>
        <end position="525"/>
    </location>
</feature>
<feature type="transmembrane region" description="Beta stranded" evidence="1">
    <location>
        <begin position="531"/>
        <end position="546"/>
    </location>
</feature>
<feature type="transmembrane region" description="Beta stranded" evidence="1">
    <location>
        <begin position="559"/>
        <end position="573"/>
    </location>
</feature>
<feature type="transmembrane region" description="Beta stranded" evidence="1">
    <location>
        <begin position="586"/>
        <end position="597"/>
    </location>
</feature>
<feature type="transmembrane region" description="Beta stranded" evidence="1">
    <location>
        <begin position="603"/>
        <end position="615"/>
    </location>
</feature>
<feature type="domain" description="TBDR plug" evidence="2">
    <location>
        <begin position="38"/>
        <end position="152"/>
    </location>
</feature>
<feature type="domain" description="TBDR beta-barrel" evidence="2">
    <location>
        <begin position="155"/>
        <end position="615"/>
    </location>
</feature>
<feature type="short sequence motif" description="TonB box">
    <location>
        <begin position="26"/>
        <end position="33"/>
    </location>
</feature>
<feature type="short sequence motif" description="TonB C-terminal box">
    <location>
        <begin position="598"/>
        <end position="615"/>
    </location>
</feature>
<feature type="binding site" evidence="1">
    <location>
        <position position="85"/>
    </location>
    <ligand>
        <name>cyanocob(III)alamin</name>
        <dbReference type="ChEBI" id="CHEBI:17439"/>
    </ligand>
</feature>
<feature type="binding site" evidence="1">
    <location>
        <position position="92"/>
    </location>
    <ligand>
        <name>cyanocob(III)alamin</name>
        <dbReference type="ChEBI" id="CHEBI:17439"/>
    </ligand>
</feature>
<feature type="binding site" evidence="1">
    <location>
        <begin position="110"/>
        <end position="111"/>
    </location>
    <ligand>
        <name>cyanocob(III)alamin</name>
        <dbReference type="ChEBI" id="CHEBI:17439"/>
    </ligand>
</feature>
<feature type="binding site" evidence="1">
    <location>
        <position position="199"/>
    </location>
    <ligand>
        <name>Ca(2+)</name>
        <dbReference type="ChEBI" id="CHEBI:29108"/>
        <label>1</label>
    </ligand>
</feature>
<feature type="binding site" evidence="1">
    <location>
        <position position="210"/>
    </location>
    <ligand>
        <name>Ca(2+)</name>
        <dbReference type="ChEBI" id="CHEBI:29108"/>
        <label>1</label>
    </ligand>
</feature>
<feature type="binding site" evidence="1">
    <location>
        <position position="212"/>
    </location>
    <ligand>
        <name>Ca(2+)</name>
        <dbReference type="ChEBI" id="CHEBI:29108"/>
        <label>1</label>
    </ligand>
</feature>
<feature type="binding site" evidence="1">
    <location>
        <position position="212"/>
    </location>
    <ligand>
        <name>Ca(2+)</name>
        <dbReference type="ChEBI" id="CHEBI:29108"/>
        <label>2</label>
    </ligand>
</feature>
<feature type="binding site" evidence="1">
    <location>
        <position position="214"/>
    </location>
    <ligand>
        <name>Ca(2+)</name>
        <dbReference type="ChEBI" id="CHEBI:29108"/>
        <label>1</label>
    </ligand>
</feature>
<feature type="binding site" evidence="1">
    <location>
        <position position="214"/>
    </location>
    <ligand>
        <name>Ca(2+)</name>
        <dbReference type="ChEBI" id="CHEBI:29108"/>
        <label>2</label>
    </ligand>
</feature>
<feature type="binding site" evidence="1">
    <location>
        <position position="248"/>
    </location>
    <ligand>
        <name>Ca(2+)</name>
        <dbReference type="ChEBI" id="CHEBI:29108"/>
        <label>2</label>
    </ligand>
</feature>
<feature type="binding site" evidence="1">
    <location>
        <position position="249"/>
    </location>
    <ligand>
        <name>Ca(2+)</name>
        <dbReference type="ChEBI" id="CHEBI:29108"/>
        <label>1</label>
    </ligand>
</feature>
<feature type="binding site" evidence="1">
    <location>
        <position position="249"/>
    </location>
    <ligand>
        <name>Ca(2+)</name>
        <dbReference type="ChEBI" id="CHEBI:29108"/>
        <label>2</label>
    </ligand>
</feature>
<feature type="binding site" evidence="1">
    <location>
        <position position="255"/>
    </location>
    <ligand>
        <name>Ca(2+)</name>
        <dbReference type="ChEBI" id="CHEBI:29108"/>
        <label>2</label>
    </ligand>
</feature>
<feature type="binding site" evidence="1">
    <location>
        <position position="303"/>
    </location>
    <ligand>
        <name>cyanocob(III)alamin</name>
        <dbReference type="ChEBI" id="CHEBI:17439"/>
    </ligand>
</feature>
<feature type="binding site" evidence="1">
    <location>
        <position position="513"/>
    </location>
    <ligand>
        <name>cyanocob(III)alamin</name>
        <dbReference type="ChEBI" id="CHEBI:17439"/>
    </ligand>
</feature>
<feature type="binding site" evidence="1">
    <location>
        <position position="547"/>
    </location>
    <ligand>
        <name>cyanocob(III)alamin</name>
        <dbReference type="ChEBI" id="CHEBI:17439"/>
    </ligand>
</feature>
<proteinExistence type="inferred from homology"/>
<evidence type="ECO:0000255" key="1">
    <source>
        <dbReference type="HAMAP-Rule" id="MF_01531"/>
    </source>
</evidence>
<evidence type="ECO:0000255" key="2">
    <source>
        <dbReference type="PROSITE-ProRule" id="PRU01360"/>
    </source>
</evidence>
<organism>
    <name type="scientific">Pectobacterium atrosepticum (strain SCRI 1043 / ATCC BAA-672)</name>
    <name type="common">Erwinia carotovora subsp. atroseptica</name>
    <dbReference type="NCBI Taxonomy" id="218491"/>
    <lineage>
        <taxon>Bacteria</taxon>
        <taxon>Pseudomonadati</taxon>
        <taxon>Pseudomonadota</taxon>
        <taxon>Gammaproteobacteria</taxon>
        <taxon>Enterobacterales</taxon>
        <taxon>Pectobacteriaceae</taxon>
        <taxon>Pectobacterium</taxon>
    </lineage>
</organism>
<keyword id="KW-0106">Calcium</keyword>
<keyword id="KW-0998">Cell outer membrane</keyword>
<keyword id="KW-0406">Ion transport</keyword>
<keyword id="KW-0472">Membrane</keyword>
<keyword id="KW-0479">Metal-binding</keyword>
<keyword id="KW-0626">Porin</keyword>
<keyword id="KW-1185">Reference proteome</keyword>
<keyword id="KW-0732">Signal</keyword>
<keyword id="KW-0798">TonB box</keyword>
<keyword id="KW-0812">Transmembrane</keyword>
<keyword id="KW-1134">Transmembrane beta strand</keyword>
<keyword id="KW-0813">Transport</keyword>